<organism>
    <name type="scientific">Penicillium chrysogenum</name>
    <name type="common">Penicillium notatum</name>
    <dbReference type="NCBI Taxonomy" id="5076"/>
    <lineage>
        <taxon>Eukaryota</taxon>
        <taxon>Fungi</taxon>
        <taxon>Dikarya</taxon>
        <taxon>Ascomycota</taxon>
        <taxon>Pezizomycotina</taxon>
        <taxon>Eurotiomycetes</taxon>
        <taxon>Eurotiomycetidae</taxon>
        <taxon>Eurotiales</taxon>
        <taxon>Aspergillaceae</taxon>
        <taxon>Penicillium</taxon>
        <taxon>Penicillium chrysogenum species complex</taxon>
    </lineage>
</organism>
<feature type="signal peptide" evidence="3">
    <location>
        <begin position="1" status="less than"/>
        <end position="9"/>
    </location>
</feature>
<feature type="chain" id="PRO_0000024639" description="Lysophospholipase">
    <location>
        <begin position="10"/>
        <end position="612"/>
    </location>
</feature>
<feature type="domain" description="PLA2c" evidence="2">
    <location>
        <begin position="24"/>
        <end position="571"/>
    </location>
</feature>
<feature type="glycosylation site" description="N-linked (GlcNAc...) asparagine" evidence="1">
    <location>
        <position position="41"/>
    </location>
</feature>
<feature type="glycosylation site" description="N-linked (GlcNAc...) asparagine" evidence="1">
    <location>
        <position position="81"/>
    </location>
</feature>
<feature type="glycosylation site" description="N-linked (GlcNAc...) asparagine" evidence="1">
    <location>
        <position position="116"/>
    </location>
</feature>
<feature type="glycosylation site" description="N-linked (GlcNAc...) asparagine" evidence="1">
    <location>
        <position position="150"/>
    </location>
</feature>
<feature type="glycosylation site" description="N-linked (GlcNAc...) asparagine" evidence="1">
    <location>
        <position position="223"/>
    </location>
</feature>
<feature type="glycosylation site" description="N-linked (GlcNAc...) asparagine" evidence="1">
    <location>
        <position position="267"/>
    </location>
</feature>
<feature type="glycosylation site" description="N-linked (GlcNAc...) asparagine" evidence="1">
    <location>
        <position position="306"/>
    </location>
</feature>
<feature type="glycosylation site" description="N-linked (GlcNAc...) asparagine" evidence="1">
    <location>
        <position position="335"/>
    </location>
</feature>
<feature type="glycosylation site" description="N-linked (GlcNAc...) asparagine" evidence="1">
    <location>
        <position position="427"/>
    </location>
</feature>
<feature type="glycosylation site" description="N-linked (GlcNAc...) asparagine" evidence="1">
    <location>
        <position position="440"/>
    </location>
</feature>
<feature type="glycosylation site" description="N-linked (GlcNAc...) asparagine" evidence="1">
    <location>
        <position position="446"/>
    </location>
</feature>
<feature type="glycosylation site" description="N-linked (GlcNAc...) asparagine" evidence="1">
    <location>
        <position position="477"/>
    </location>
</feature>
<feature type="glycosylation site" description="N-linked (GlcNAc...) asparagine" evidence="1">
    <location>
        <position position="498"/>
    </location>
</feature>
<feature type="glycosylation site" description="N-linked (GlcNAc...) asparagine" evidence="1">
    <location>
        <position position="526"/>
    </location>
</feature>
<feature type="glycosylation site" description="N-linked (GlcNAc...) asparagine" evidence="1">
    <location>
        <position position="532"/>
    </location>
</feature>
<feature type="glycosylation site" description="N-linked (GlcNAc...) asparagine" evidence="1">
    <location>
        <position position="567"/>
    </location>
</feature>
<feature type="glycosylation site" description="N-linked (GlcNAc...) asparagine" evidence="1">
    <location>
        <position position="571"/>
    </location>
</feature>
<feature type="disulfide bond" evidence="1">
    <location>
        <begin position="25"/>
        <end status="unknown"/>
    </location>
</feature>
<feature type="non-terminal residue">
    <location>
        <position position="1"/>
    </location>
</feature>
<comment type="function">
    <text>Catalyzes the release of fatty acids from lysophospholipids.</text>
</comment>
<comment type="catalytic activity">
    <reaction>
        <text>a 1-acyl-sn-glycero-3-phosphocholine + H2O = sn-glycerol 3-phosphocholine + a fatty acid + H(+)</text>
        <dbReference type="Rhea" id="RHEA:15177"/>
        <dbReference type="ChEBI" id="CHEBI:15377"/>
        <dbReference type="ChEBI" id="CHEBI:15378"/>
        <dbReference type="ChEBI" id="CHEBI:16870"/>
        <dbReference type="ChEBI" id="CHEBI:28868"/>
        <dbReference type="ChEBI" id="CHEBI:58168"/>
        <dbReference type="EC" id="3.1.1.5"/>
    </reaction>
</comment>
<comment type="subcellular location">
    <subcellularLocation>
        <location>Secreted</location>
    </subcellularLocation>
</comment>
<comment type="PTM">
    <text>N-glycosylated.</text>
</comment>
<comment type="similarity">
    <text evidence="4">Belongs to the lysophospholipase family.</text>
</comment>
<accession>P39457</accession>
<keyword id="KW-0903">Direct protein sequencing</keyword>
<keyword id="KW-1015">Disulfide bond</keyword>
<keyword id="KW-0325">Glycoprotein</keyword>
<keyword id="KW-0378">Hydrolase</keyword>
<keyword id="KW-0442">Lipid degradation</keyword>
<keyword id="KW-0443">Lipid metabolism</keyword>
<keyword id="KW-0964">Secreted</keyword>
<keyword id="KW-0732">Signal</keyword>
<dbReference type="EC" id="3.1.1.5"/>
<dbReference type="EMBL" id="X60348">
    <property type="protein sequence ID" value="CAA42906.1"/>
    <property type="molecule type" value="mRNA"/>
</dbReference>
<dbReference type="PIR" id="S29318">
    <property type="entry name" value="S29318"/>
</dbReference>
<dbReference type="SMR" id="P39457"/>
<dbReference type="GO" id="GO:0005829">
    <property type="term" value="C:cytosol"/>
    <property type="evidence" value="ECO:0007669"/>
    <property type="project" value="TreeGrafter"/>
</dbReference>
<dbReference type="GO" id="GO:0005783">
    <property type="term" value="C:endoplasmic reticulum"/>
    <property type="evidence" value="ECO:0007669"/>
    <property type="project" value="TreeGrafter"/>
</dbReference>
<dbReference type="GO" id="GO:0005576">
    <property type="term" value="C:extracellular region"/>
    <property type="evidence" value="ECO:0007669"/>
    <property type="project" value="UniProtKB-SubCell"/>
</dbReference>
<dbReference type="GO" id="GO:0004622">
    <property type="term" value="F:lysophospholipase activity"/>
    <property type="evidence" value="ECO:0007669"/>
    <property type="project" value="UniProtKB-EC"/>
</dbReference>
<dbReference type="GO" id="GO:0004623">
    <property type="term" value="F:phospholipase A2 activity"/>
    <property type="evidence" value="ECO:0007669"/>
    <property type="project" value="TreeGrafter"/>
</dbReference>
<dbReference type="GO" id="GO:0046475">
    <property type="term" value="P:glycerophospholipid catabolic process"/>
    <property type="evidence" value="ECO:0007669"/>
    <property type="project" value="TreeGrafter"/>
</dbReference>
<dbReference type="CDD" id="cd07203">
    <property type="entry name" value="cPLA2_Fungal_PLB"/>
    <property type="match status" value="1"/>
</dbReference>
<dbReference type="FunFam" id="3.40.1090.10:FF:000010">
    <property type="entry name" value="Lysophospholipase"/>
    <property type="match status" value="1"/>
</dbReference>
<dbReference type="Gene3D" id="3.40.1090.10">
    <property type="entry name" value="Cytosolic phospholipase A2 catalytic domain"/>
    <property type="match status" value="1"/>
</dbReference>
<dbReference type="InterPro" id="IPR016035">
    <property type="entry name" value="Acyl_Trfase/lysoPLipase"/>
</dbReference>
<dbReference type="InterPro" id="IPR002642">
    <property type="entry name" value="LysoPLipase_cat_dom"/>
</dbReference>
<dbReference type="PANTHER" id="PTHR10728">
    <property type="entry name" value="CYTOSOLIC PHOSPHOLIPASE A2"/>
    <property type="match status" value="1"/>
</dbReference>
<dbReference type="PANTHER" id="PTHR10728:SF62">
    <property type="entry name" value="LYSOPHOSPHOLIPASE"/>
    <property type="match status" value="1"/>
</dbReference>
<dbReference type="Pfam" id="PF01735">
    <property type="entry name" value="PLA2_B"/>
    <property type="match status" value="1"/>
</dbReference>
<dbReference type="SMART" id="SM00022">
    <property type="entry name" value="PLAc"/>
    <property type="match status" value="1"/>
</dbReference>
<dbReference type="SUPFAM" id="SSF52151">
    <property type="entry name" value="FabD/lysophospholipase-like"/>
    <property type="match status" value="1"/>
</dbReference>
<dbReference type="PROSITE" id="PS51210">
    <property type="entry name" value="PLA2C"/>
    <property type="match status" value="1"/>
</dbReference>
<evidence type="ECO:0000255" key="1"/>
<evidence type="ECO:0000255" key="2">
    <source>
        <dbReference type="PROSITE-ProRule" id="PRU00555"/>
    </source>
</evidence>
<evidence type="ECO:0000269" key="3">
    <source>
    </source>
</evidence>
<evidence type="ECO:0000305" key="4"/>
<name>PLB1_PENCH</name>
<proteinExistence type="evidence at protein level"/>
<protein>
    <recommendedName>
        <fullName>Lysophospholipase</fullName>
        <ecNumber>3.1.1.5</ecNumber>
    </recommendedName>
    <alternativeName>
        <fullName>Phospholipase B</fullName>
    </alternativeName>
</protein>
<sequence>DITFAGVQRALPNAPDGYVPTSVSCPASRPTVRSAAKLSTNETSWLEVRRGKTLSALKDFFGHVKVGDYDVGAYLDKHSGNSSSLPNIGIAVSGGGWRALMNGAGAVKAFDSRTDNATATGHLGGLLQSATYISGLSGGSWLLGSIYINNFTTVDKLQTHEAGSVWQFGNSIIEGPDAGGIQLLDSAGYYKDLADAVDGKKKAGFDTTLTDIWGRALSYQMFNASNGGLSYTWSSIADTPEFQDGDYPMPFVVADGRNPGELVIGSNSTVYEFNPWEFGTFDPTIFGFVPLEYLGSKFEGGSLPSNESCIRGFDSAGFVIGTSSSLFNQFLLQINTTSLPSFIKDVFNGILFDLDKSQNDIASYDPNPFYKYNEHSSPYAAQKLLDVVDGGEDGQNVPLHPLIQPERHVDVIFAVDSSADTDYFWPNGTSLVATYERSLNSSGIANGTAFPAVPDQNTFINLGLSTRPSFFGCDSSNQTGPSPLVVYIPNAPYSYHSNISTFQLSTDDAERDNIILNGYEVATMANSTLDDNWTACVACAILSRSFERTGTTLPDICSQCFDRYCWNGTVNSTRPESYDPAFYLADNSMASVSLPTMLSTVVAAGLAMLILV</sequence>
<reference key="1">
    <citation type="journal article" date="1991" name="Eur. J. Biochem.">
        <title>Primary structure of protein moiety of Penicillium notatum phospholipase B deduced from the cDNA.</title>
        <authorList>
            <person name="Masuda N."/>
            <person name="Kitamura N."/>
            <person name="Saito K."/>
        </authorList>
    </citation>
    <scope>NUCLEOTIDE SEQUENCE [MRNA]</scope>
    <scope>PROTEIN SEQUENCE OF 10-20 AND 185-199</scope>
    <source>
        <strain>ATCC 34514 / NBRC 4640</strain>
    </source>
</reference>